<gene>
    <name type="ORF">SPAC12B10.08c</name>
</gene>
<evidence type="ECO:0000250" key="1"/>
<evidence type="ECO:0000255" key="2"/>
<evidence type="ECO:0000305" key="3"/>
<reference key="1">
    <citation type="journal article" date="2002" name="Nature">
        <title>The genome sequence of Schizosaccharomyces pombe.</title>
        <authorList>
            <person name="Wood V."/>
            <person name="Gwilliam R."/>
            <person name="Rajandream M.A."/>
            <person name="Lyne M.H."/>
            <person name="Lyne R."/>
            <person name="Stewart A."/>
            <person name="Sgouros J.G."/>
            <person name="Peat N."/>
            <person name="Hayles J."/>
            <person name="Baker S.G."/>
            <person name="Basham D."/>
            <person name="Bowman S."/>
            <person name="Brooks K."/>
            <person name="Brown D."/>
            <person name="Brown S."/>
            <person name="Chillingworth T."/>
            <person name="Churcher C.M."/>
            <person name="Collins M."/>
            <person name="Connor R."/>
            <person name="Cronin A."/>
            <person name="Davis P."/>
            <person name="Feltwell T."/>
            <person name="Fraser A."/>
            <person name="Gentles S."/>
            <person name="Goble A."/>
            <person name="Hamlin N."/>
            <person name="Harris D.E."/>
            <person name="Hidalgo J."/>
            <person name="Hodgson G."/>
            <person name="Holroyd S."/>
            <person name="Hornsby T."/>
            <person name="Howarth S."/>
            <person name="Huckle E.J."/>
            <person name="Hunt S."/>
            <person name="Jagels K."/>
            <person name="James K.D."/>
            <person name="Jones L."/>
            <person name="Jones M."/>
            <person name="Leather S."/>
            <person name="McDonald S."/>
            <person name="McLean J."/>
            <person name="Mooney P."/>
            <person name="Moule S."/>
            <person name="Mungall K.L."/>
            <person name="Murphy L.D."/>
            <person name="Niblett D."/>
            <person name="Odell C."/>
            <person name="Oliver K."/>
            <person name="O'Neil S."/>
            <person name="Pearson D."/>
            <person name="Quail M.A."/>
            <person name="Rabbinowitsch E."/>
            <person name="Rutherford K.M."/>
            <person name="Rutter S."/>
            <person name="Saunders D."/>
            <person name="Seeger K."/>
            <person name="Sharp S."/>
            <person name="Skelton J."/>
            <person name="Simmonds M.N."/>
            <person name="Squares R."/>
            <person name="Squares S."/>
            <person name="Stevens K."/>
            <person name="Taylor K."/>
            <person name="Taylor R.G."/>
            <person name="Tivey A."/>
            <person name="Walsh S.V."/>
            <person name="Warren T."/>
            <person name="Whitehead S."/>
            <person name="Woodward J.R."/>
            <person name="Volckaert G."/>
            <person name="Aert R."/>
            <person name="Robben J."/>
            <person name="Grymonprez B."/>
            <person name="Weltjens I."/>
            <person name="Vanstreels E."/>
            <person name="Rieger M."/>
            <person name="Schaefer M."/>
            <person name="Mueller-Auer S."/>
            <person name="Gabel C."/>
            <person name="Fuchs M."/>
            <person name="Duesterhoeft A."/>
            <person name="Fritzc C."/>
            <person name="Holzer E."/>
            <person name="Moestl D."/>
            <person name="Hilbert H."/>
            <person name="Borzym K."/>
            <person name="Langer I."/>
            <person name="Beck A."/>
            <person name="Lehrach H."/>
            <person name="Reinhardt R."/>
            <person name="Pohl T.M."/>
            <person name="Eger P."/>
            <person name="Zimmermann W."/>
            <person name="Wedler H."/>
            <person name="Wambutt R."/>
            <person name="Purnelle B."/>
            <person name="Goffeau A."/>
            <person name="Cadieu E."/>
            <person name="Dreano S."/>
            <person name="Gloux S."/>
            <person name="Lelaure V."/>
            <person name="Mottier S."/>
            <person name="Galibert F."/>
            <person name="Aves S.J."/>
            <person name="Xiang Z."/>
            <person name="Hunt C."/>
            <person name="Moore K."/>
            <person name="Hurst S.M."/>
            <person name="Lucas M."/>
            <person name="Rochet M."/>
            <person name="Gaillardin C."/>
            <person name="Tallada V.A."/>
            <person name="Garzon A."/>
            <person name="Thode G."/>
            <person name="Daga R.R."/>
            <person name="Cruzado L."/>
            <person name="Jimenez J."/>
            <person name="Sanchez M."/>
            <person name="del Rey F."/>
            <person name="Benito J."/>
            <person name="Dominguez A."/>
            <person name="Revuelta J.L."/>
            <person name="Moreno S."/>
            <person name="Armstrong J."/>
            <person name="Forsburg S.L."/>
            <person name="Cerutti L."/>
            <person name="Lowe T."/>
            <person name="McCombie W.R."/>
            <person name="Paulsen I."/>
            <person name="Potashkin J."/>
            <person name="Shpakovski G.V."/>
            <person name="Ussery D."/>
            <person name="Barrell B.G."/>
            <person name="Nurse P."/>
        </authorList>
    </citation>
    <scope>NUCLEOTIDE SEQUENCE [LARGE SCALE GENOMIC DNA]</scope>
    <source>
        <strain>972 / ATCC 24843</strain>
    </source>
</reference>
<accession>Q10441</accession>
<keyword id="KW-0067">ATP-binding</keyword>
<keyword id="KW-0963">Cytoplasm</keyword>
<keyword id="KW-0436">Ligase</keyword>
<keyword id="KW-0547">Nucleotide-binding</keyword>
<keyword id="KW-1185">Reference proteome</keyword>
<keyword id="KW-0819">tRNA processing</keyword>
<proteinExistence type="inferred from homology"/>
<protein>
    <recommendedName>
        <fullName>Probable tRNA(Ile)-lysidine synthase</fullName>
        <ecNumber>6.3.4.19</ecNumber>
    </recommendedName>
    <alternativeName>
        <fullName>tRNA(Ile)-2-lysyl-cytidine synthase</fullName>
    </alternativeName>
    <alternativeName>
        <fullName>tRNA(Ile)-lysidine synthetase</fullName>
    </alternativeName>
</protein>
<sequence length="456" mass="52362">MDTIKLKEFYNSLVSIRRRVGHRRLGIAVSGGVDSMLLSWFMKESQIMFGWPNQFIAFVVDHRIRKNSTEEALQTIWNLNRMLIPNVYLNINWGNDDVHSLTNLETIAREHRYQVLTRACITHNIRHICTAHHANDQAETIFMRLLRRKPGTWGGLCAMKPVSQIPESDSICGASNIELLRPLLPYYKNQILNTAKQHGIAWEEDPTNADINLTPRNAIRRFLNQHAALTVEATKLATAFQSLQVNIDNKVDEILKDNIVSYHQPSGTLSLCFSKNELKKHSNLTKEELLLRCLTLTTSCRQIKRSSVVSLCNSVFDGKKLTIAKCLLTSSSIKDDTKLQLQISRQPFSKAELKKKTITINPDRYVLWDHRFWIKYSCKNTQTTLILRPLLSKDLNSLKGFLSKEEFLKFCIQVPGHIRFTIPVLSEENDKLVGIPTFGFNFRSDIISNCLHKFKL</sequence>
<feature type="chain" id="PRO_0000181822" description="Probable tRNA(Ile)-lysidine synthase">
    <location>
        <begin position="1"/>
        <end position="456"/>
    </location>
</feature>
<feature type="binding site" evidence="2">
    <location>
        <begin position="30"/>
        <end position="35"/>
    </location>
    <ligand>
        <name>ATP</name>
        <dbReference type="ChEBI" id="CHEBI:30616"/>
    </ligand>
</feature>
<comment type="function">
    <text evidence="1">Ligates lysine onto the cytidine present at position 34 of the AUA codon-specific tRNA(Ile) that contains the anticodon CAU, in an ATP-dependent manner. Cytidine is converted to lysidine, thus changing the amino acid specificity of the tRNA from methionine to isoleucine (By similarity).</text>
</comment>
<comment type="catalytic activity">
    <reaction>
        <text>cytidine(34) in tRNA(Ile2) + L-lysine + ATP = lysidine(34) in tRNA(Ile2) + AMP + diphosphate + H(+)</text>
        <dbReference type="Rhea" id="RHEA:43744"/>
        <dbReference type="Rhea" id="RHEA-COMP:10625"/>
        <dbReference type="Rhea" id="RHEA-COMP:10670"/>
        <dbReference type="ChEBI" id="CHEBI:15378"/>
        <dbReference type="ChEBI" id="CHEBI:30616"/>
        <dbReference type="ChEBI" id="CHEBI:32551"/>
        <dbReference type="ChEBI" id="CHEBI:33019"/>
        <dbReference type="ChEBI" id="CHEBI:82748"/>
        <dbReference type="ChEBI" id="CHEBI:83665"/>
        <dbReference type="ChEBI" id="CHEBI:456215"/>
        <dbReference type="EC" id="6.3.4.19"/>
    </reaction>
</comment>
<comment type="subcellular location">
    <subcellularLocation>
        <location evidence="3">Cytoplasm</location>
    </subcellularLocation>
</comment>
<comment type="domain">
    <text>The N-terminal region contains the highly conserved SGGXDS motif, predicted to be a P-loop motif involved in ATP binding.</text>
</comment>
<comment type="similarity">
    <text evidence="3">Belongs to the tRNA(Ile)-lysidine synthase family.</text>
</comment>
<organism>
    <name type="scientific">Schizosaccharomyces pombe (strain 972 / ATCC 24843)</name>
    <name type="common">Fission yeast</name>
    <dbReference type="NCBI Taxonomy" id="284812"/>
    <lineage>
        <taxon>Eukaryota</taxon>
        <taxon>Fungi</taxon>
        <taxon>Dikarya</taxon>
        <taxon>Ascomycota</taxon>
        <taxon>Taphrinomycotina</taxon>
        <taxon>Schizosaccharomycetes</taxon>
        <taxon>Schizosaccharomycetales</taxon>
        <taxon>Schizosaccharomycetaceae</taxon>
        <taxon>Schizosaccharomyces</taxon>
    </lineage>
</organism>
<dbReference type="EC" id="6.3.4.19"/>
<dbReference type="EMBL" id="CU329670">
    <property type="protein sequence ID" value="CAA94698.1"/>
    <property type="molecule type" value="Genomic_DNA"/>
</dbReference>
<dbReference type="PIR" id="T37575">
    <property type="entry name" value="T37575"/>
</dbReference>
<dbReference type="SMR" id="Q10441"/>
<dbReference type="STRING" id="284812.Q10441"/>
<dbReference type="SwissPalm" id="Q10441"/>
<dbReference type="PaxDb" id="4896-SPAC12B10.08c.1"/>
<dbReference type="EnsemblFungi" id="SPAC12B10.08c.1">
    <property type="protein sequence ID" value="SPAC12B10.08c.1:pep"/>
    <property type="gene ID" value="SPAC12B10.08c"/>
</dbReference>
<dbReference type="KEGG" id="spo:2543003"/>
<dbReference type="PomBase" id="SPAC12B10.08c"/>
<dbReference type="VEuPathDB" id="FungiDB:SPAC12B10.08c"/>
<dbReference type="eggNOG" id="ENOG502QQNE">
    <property type="taxonomic scope" value="Eukaryota"/>
</dbReference>
<dbReference type="HOGENOM" id="CLU_015599_1_0_1"/>
<dbReference type="InParanoid" id="Q10441"/>
<dbReference type="OMA" id="ARIPECH"/>
<dbReference type="PhylomeDB" id="Q10441"/>
<dbReference type="PRO" id="PR:Q10441"/>
<dbReference type="Proteomes" id="UP000002485">
    <property type="component" value="Chromosome I"/>
</dbReference>
<dbReference type="GO" id="GO:0005739">
    <property type="term" value="C:mitochondrion"/>
    <property type="evidence" value="ECO:0007005"/>
    <property type="project" value="PomBase"/>
</dbReference>
<dbReference type="GO" id="GO:0005524">
    <property type="term" value="F:ATP binding"/>
    <property type="evidence" value="ECO:0000255"/>
    <property type="project" value="PomBase"/>
</dbReference>
<dbReference type="GO" id="GO:0032267">
    <property type="term" value="F:tRNA(Ile)-lysidine synthase activity"/>
    <property type="evidence" value="ECO:0007669"/>
    <property type="project" value="UniProtKB-EC"/>
</dbReference>
<dbReference type="GO" id="GO:0002127">
    <property type="term" value="P:tRNA wobble base cytosine methylation"/>
    <property type="evidence" value="ECO:0000303"/>
    <property type="project" value="PomBase"/>
</dbReference>
<dbReference type="CDD" id="cd01992">
    <property type="entry name" value="TilS_N"/>
    <property type="match status" value="1"/>
</dbReference>
<dbReference type="Gene3D" id="3.40.50.620">
    <property type="entry name" value="HUPs"/>
    <property type="match status" value="1"/>
</dbReference>
<dbReference type="HAMAP" id="MF_01161">
    <property type="entry name" value="tRNA_Ile_lys_synt"/>
    <property type="match status" value="1"/>
</dbReference>
<dbReference type="InterPro" id="IPR014729">
    <property type="entry name" value="Rossmann-like_a/b/a_fold"/>
</dbReference>
<dbReference type="InterPro" id="IPR011063">
    <property type="entry name" value="TilS/TtcA_N"/>
</dbReference>
<dbReference type="InterPro" id="IPR012094">
    <property type="entry name" value="tRNA_Ile_lys_synt"/>
</dbReference>
<dbReference type="InterPro" id="IPR012795">
    <property type="entry name" value="tRNA_Ile_lys_synt_N"/>
</dbReference>
<dbReference type="NCBIfam" id="TIGR02432">
    <property type="entry name" value="lysidine_TilS_N"/>
    <property type="match status" value="1"/>
</dbReference>
<dbReference type="PANTHER" id="PTHR43033">
    <property type="entry name" value="TRNA(ILE)-LYSIDINE SYNTHASE-RELATED"/>
    <property type="match status" value="1"/>
</dbReference>
<dbReference type="PANTHER" id="PTHR43033:SF1">
    <property type="entry name" value="TRNA(ILE)-LYSIDINE SYNTHASE-RELATED"/>
    <property type="match status" value="1"/>
</dbReference>
<dbReference type="Pfam" id="PF01171">
    <property type="entry name" value="ATP_bind_3"/>
    <property type="match status" value="1"/>
</dbReference>
<dbReference type="SUPFAM" id="SSF52402">
    <property type="entry name" value="Adenine nucleotide alpha hydrolases-like"/>
    <property type="match status" value="1"/>
</dbReference>
<name>TILS_SCHPO</name>